<name>COX3_MAMPR</name>
<feature type="chain" id="PRO_0000232845" description="Cytochrome c oxidase subunit 3">
    <location>
        <begin position="1"/>
        <end position="261"/>
    </location>
</feature>
<feature type="topological domain" description="Mitochondrial matrix" evidence="1">
    <location>
        <begin position="1"/>
        <end position="15"/>
    </location>
</feature>
<feature type="transmembrane region" description="Helical; Name=I" evidence="1">
    <location>
        <begin position="16"/>
        <end position="34"/>
    </location>
</feature>
<feature type="topological domain" description="Mitochondrial intermembrane" evidence="1">
    <location>
        <begin position="35"/>
        <end position="40"/>
    </location>
</feature>
<feature type="transmembrane region" description="Helical; Name=II" evidence="1">
    <location>
        <begin position="41"/>
        <end position="66"/>
    </location>
</feature>
<feature type="topological domain" description="Mitochondrial matrix" evidence="1">
    <location>
        <begin position="67"/>
        <end position="72"/>
    </location>
</feature>
<feature type="transmembrane region" description="Helical; Name=III" evidence="1">
    <location>
        <begin position="73"/>
        <end position="105"/>
    </location>
</feature>
<feature type="topological domain" description="Mitochondrial intermembrane" evidence="1">
    <location>
        <begin position="106"/>
        <end position="128"/>
    </location>
</feature>
<feature type="transmembrane region" description="Helical; Name=IV" evidence="1">
    <location>
        <begin position="129"/>
        <end position="152"/>
    </location>
</feature>
<feature type="topological domain" description="Mitochondrial matrix" evidence="1">
    <location>
        <begin position="153"/>
        <end position="155"/>
    </location>
</feature>
<feature type="transmembrane region" description="Helical; Name=V" evidence="1">
    <location>
        <begin position="156"/>
        <end position="183"/>
    </location>
</feature>
<feature type="topological domain" description="Mitochondrial intermembrane" evidence="1">
    <location>
        <begin position="184"/>
        <end position="190"/>
    </location>
</feature>
<feature type="transmembrane region" description="Helical; Name=VI" evidence="1">
    <location>
        <begin position="191"/>
        <end position="223"/>
    </location>
</feature>
<feature type="topological domain" description="Mitochondrial matrix" evidence="1">
    <location>
        <begin position="224"/>
        <end position="232"/>
    </location>
</feature>
<feature type="transmembrane region" description="Helical; Name=VII" evidence="1">
    <location>
        <begin position="233"/>
        <end position="256"/>
    </location>
</feature>
<feature type="topological domain" description="Mitochondrial intermembrane" evidence="1">
    <location>
        <begin position="257"/>
        <end position="261"/>
    </location>
</feature>
<feature type="sequence conflict" description="In Ref. 2; ABC17884." evidence="3" ref="2">
    <original>V</original>
    <variation>I</variation>
    <location>
        <position position="41"/>
    </location>
</feature>
<keyword id="KW-0952">Extinct organism protein</keyword>
<keyword id="KW-0472">Membrane</keyword>
<keyword id="KW-0496">Mitochondrion</keyword>
<keyword id="KW-0999">Mitochondrion inner membrane</keyword>
<keyword id="KW-1278">Translocase</keyword>
<keyword id="KW-0812">Transmembrane</keyword>
<keyword id="KW-1133">Transmembrane helix</keyword>
<evidence type="ECO:0000250" key="1">
    <source>
        <dbReference type="UniProtKB" id="P00415"/>
    </source>
</evidence>
<evidence type="ECO:0000250" key="2">
    <source>
        <dbReference type="UniProtKB" id="P00420"/>
    </source>
</evidence>
<evidence type="ECO:0000305" key="3"/>
<accession>Q38PR6</accession>
<accession>Q2I3I1</accession>
<proteinExistence type="inferred from homology"/>
<gene>
    <name type="primary">MT-CO3</name>
    <name type="synonym">COIII</name>
    <name type="synonym">COXIII</name>
    <name type="synonym">MTCO3</name>
</gene>
<comment type="function">
    <text evidence="2">Component of the cytochrome c oxidase, the last enzyme in the mitochondrial electron transport chain which drives oxidative phosphorylation. The respiratory chain contains 3 multisubunit complexes succinate dehydrogenase (complex II, CII), ubiquinol-cytochrome c oxidoreductase (cytochrome b-c1 complex, complex III, CIII) and cytochrome c oxidase (complex IV, CIV), that cooperate to transfer electrons derived from NADH and succinate to molecular oxygen, creating an electrochemical gradient over the inner membrane that drives transmembrane transport and the ATP synthase. Cytochrome c oxidase is the component of the respiratory chain that catalyzes the reduction of oxygen to water. Electrons originating from reduced cytochrome c in the intermembrane space (IMS) are transferred via the dinuclear copper A center (CU(A)) of subunit 2 and heme A of subunit 1 to the active site in subunit 1, a binuclear center (BNC) formed by heme A3 and copper B (CU(B)). The BNC reduces molecular oxygen to 2 water molecules using 4 electrons from cytochrome c in the IMS and 4 protons from the mitochondrial matrix.</text>
</comment>
<comment type="catalytic activity">
    <reaction evidence="2">
        <text>4 Fe(II)-[cytochrome c] + O2 + 8 H(+)(in) = 4 Fe(III)-[cytochrome c] + 2 H2O + 4 H(+)(out)</text>
        <dbReference type="Rhea" id="RHEA:11436"/>
        <dbReference type="Rhea" id="RHEA-COMP:10350"/>
        <dbReference type="Rhea" id="RHEA-COMP:14399"/>
        <dbReference type="ChEBI" id="CHEBI:15377"/>
        <dbReference type="ChEBI" id="CHEBI:15378"/>
        <dbReference type="ChEBI" id="CHEBI:15379"/>
        <dbReference type="ChEBI" id="CHEBI:29033"/>
        <dbReference type="ChEBI" id="CHEBI:29034"/>
        <dbReference type="EC" id="7.1.1.9"/>
    </reaction>
    <physiologicalReaction direction="left-to-right" evidence="2">
        <dbReference type="Rhea" id="RHEA:11437"/>
    </physiologicalReaction>
</comment>
<comment type="subunit">
    <text evidence="1">Component of the cytochrome c oxidase (complex IV, CIV), a multisubunit enzyme composed of 14 subunits. The complex is composed of a catalytic core of 3 subunits MT-CO1, MT-CO2 and MT-CO3, encoded in the mitochondrial DNA, and 11 supernumerary subunits COX4I, COX5A, COX5B, COX6A, COX6B, COX6C, COX7A, COX7B, COX7C, COX8 and NDUFA4, which are encoded in the nuclear genome. The complex exists as a monomer or a dimer and forms supercomplexes (SCs) in the inner mitochondrial membrane with NADH-ubiquinone oxidoreductase (complex I, CI) and ubiquinol-cytochrome c oxidoreductase (cytochrome b-c1 complex, complex III, CIII), resulting in different assemblies (supercomplex SCI(1)III(2)IV(1) and megacomplex MCI(2)III(2)IV(2)).</text>
</comment>
<comment type="subcellular location">
    <subcellularLocation>
        <location evidence="1">Mitochondrion inner membrane</location>
        <topology evidence="1">Multi-pass membrane protein</topology>
    </subcellularLocation>
</comment>
<comment type="similarity">
    <text evidence="3">Belongs to the cytochrome c oxidase subunit 3 family.</text>
</comment>
<protein>
    <recommendedName>
        <fullName>Cytochrome c oxidase subunit 3</fullName>
        <ecNumber>7.1.1.9</ecNumber>
    </recommendedName>
    <alternativeName>
        <fullName>Cytochrome c oxidase polypeptide III</fullName>
    </alternativeName>
</protein>
<organism>
    <name type="scientific">Mammuthus primigenius</name>
    <name type="common">Siberian woolly mammoth</name>
    <dbReference type="NCBI Taxonomy" id="37349"/>
    <lineage>
        <taxon>Eukaryota</taxon>
        <taxon>Metazoa</taxon>
        <taxon>Chordata</taxon>
        <taxon>Craniata</taxon>
        <taxon>Vertebrata</taxon>
        <taxon>Euteleostomi</taxon>
        <taxon>Mammalia</taxon>
        <taxon>Eutheria</taxon>
        <taxon>Afrotheria</taxon>
        <taxon>Proboscidea</taxon>
        <taxon>Elephantidae</taxon>
        <taxon>Mammuthus</taxon>
    </lineage>
</organism>
<geneLocation type="mitochondrion"/>
<sequence length="261" mass="30116">MTHQTHAYHMVDPSPWPLTGALSALLMTSGLTMWFHYHSVVLLFLGLMTNTLTMFQWWRDVVREGTFQGHHTPVVQEGLRYGMILFITSEVLFFTGFFWAFYHSSLAPTPELGSYWPPVGVYPLNPLEVPLLNTSVLLASGVTITWAHHSLMEGNRKNMLQALLITILLGVYFTLLQMFEYYEASFTISDGIYGSTFFVTTGFHGLHVIIGSTFLLTCFIRQLKFHFTSNHHFGFEAAAWYWHFVDVVWLFLYLSIYWWGS</sequence>
<dbReference type="EC" id="7.1.1.9"/>
<dbReference type="EMBL" id="DQ188829">
    <property type="protein sequence ID" value="ABA29790.1"/>
    <property type="status" value="ALT_TERM"/>
    <property type="molecule type" value="Genomic_DNA"/>
</dbReference>
<dbReference type="EMBL" id="DQ316067">
    <property type="protein sequence ID" value="ABC17884.1"/>
    <property type="molecule type" value="Genomic_DNA"/>
</dbReference>
<dbReference type="SMR" id="Q38PR6"/>
<dbReference type="CTD" id="4514"/>
<dbReference type="GO" id="GO:0005743">
    <property type="term" value="C:mitochondrial inner membrane"/>
    <property type="evidence" value="ECO:0007669"/>
    <property type="project" value="UniProtKB-SubCell"/>
</dbReference>
<dbReference type="GO" id="GO:0045277">
    <property type="term" value="C:respiratory chain complex IV"/>
    <property type="evidence" value="ECO:0000250"/>
    <property type="project" value="UniProtKB"/>
</dbReference>
<dbReference type="GO" id="GO:0004129">
    <property type="term" value="F:cytochrome-c oxidase activity"/>
    <property type="evidence" value="ECO:0007669"/>
    <property type="project" value="UniProtKB-EC"/>
</dbReference>
<dbReference type="GO" id="GO:0006123">
    <property type="term" value="P:mitochondrial electron transport, cytochrome c to oxygen"/>
    <property type="evidence" value="ECO:0007669"/>
    <property type="project" value="TreeGrafter"/>
</dbReference>
<dbReference type="GO" id="GO:0008535">
    <property type="term" value="P:respiratory chain complex IV assembly"/>
    <property type="evidence" value="ECO:0000250"/>
    <property type="project" value="UniProtKB"/>
</dbReference>
<dbReference type="CDD" id="cd01665">
    <property type="entry name" value="Cyt_c_Oxidase_III"/>
    <property type="match status" value="1"/>
</dbReference>
<dbReference type="FunFam" id="1.10.287.70:FF:000048">
    <property type="entry name" value="Cytochrome c oxidase subunit 3"/>
    <property type="match status" value="1"/>
</dbReference>
<dbReference type="FunFam" id="1.20.120.80:FF:000002">
    <property type="entry name" value="Cytochrome c oxidase subunit 3"/>
    <property type="match status" value="1"/>
</dbReference>
<dbReference type="Gene3D" id="1.10.287.70">
    <property type="match status" value="1"/>
</dbReference>
<dbReference type="Gene3D" id="1.20.120.80">
    <property type="entry name" value="Cytochrome c oxidase, subunit III, four-helix bundle"/>
    <property type="match status" value="1"/>
</dbReference>
<dbReference type="InterPro" id="IPR024791">
    <property type="entry name" value="Cyt_c/ubiquinol_Oxase_su3"/>
</dbReference>
<dbReference type="InterPro" id="IPR033945">
    <property type="entry name" value="Cyt_c_oxase_su3_dom"/>
</dbReference>
<dbReference type="InterPro" id="IPR000298">
    <property type="entry name" value="Cyt_c_oxidase-like_su3"/>
</dbReference>
<dbReference type="InterPro" id="IPR035973">
    <property type="entry name" value="Cyt_c_oxidase_su3-like_sf"/>
</dbReference>
<dbReference type="InterPro" id="IPR013833">
    <property type="entry name" value="Cyt_c_oxidase_su3_a-hlx"/>
</dbReference>
<dbReference type="PANTHER" id="PTHR11403:SF7">
    <property type="entry name" value="CYTOCHROME C OXIDASE SUBUNIT 3"/>
    <property type="match status" value="1"/>
</dbReference>
<dbReference type="PANTHER" id="PTHR11403">
    <property type="entry name" value="CYTOCHROME C OXIDASE SUBUNIT III"/>
    <property type="match status" value="1"/>
</dbReference>
<dbReference type="Pfam" id="PF00510">
    <property type="entry name" value="COX3"/>
    <property type="match status" value="1"/>
</dbReference>
<dbReference type="SUPFAM" id="SSF81452">
    <property type="entry name" value="Cytochrome c oxidase subunit III-like"/>
    <property type="match status" value="1"/>
</dbReference>
<dbReference type="PROSITE" id="PS50253">
    <property type="entry name" value="COX3"/>
    <property type="match status" value="1"/>
</dbReference>
<reference key="1">
    <citation type="journal article" date="2006" name="Nature">
        <title>Multiplex amplification of the mammoth mitochondrial genome and the evolution of Elephantidae.</title>
        <authorList>
            <person name="Krause J."/>
            <person name="Dear P.H."/>
            <person name="Pollack J.L."/>
            <person name="Slatkin M."/>
            <person name="Spriggs H."/>
            <person name="Barnes I."/>
            <person name="Lister A.M."/>
            <person name="Ebersberger I."/>
            <person name="Paeaebo S."/>
            <person name="Hofreiter M."/>
        </authorList>
    </citation>
    <scope>NUCLEOTIDE SEQUENCE [GENOMIC DNA]</scope>
</reference>
<reference key="2">
    <citation type="journal article" date="2006" name="PLoS Biol.">
        <title>Complete mitochondrial genome and phylogeny of Pleistocene mammoth Mammuthus primigenius.</title>
        <authorList>
            <person name="Rogaev E.I."/>
            <person name="Moliaka Y.K."/>
            <person name="Malyarchuk B.A."/>
            <person name="Kondrashov F.A."/>
            <person name="Derenko M.V."/>
            <person name="Chumakov I."/>
            <person name="Grigorenko A.P."/>
        </authorList>
    </citation>
    <scope>NUCLEOTIDE SEQUENCE [GENOMIC DNA]</scope>
    <source>
        <tissue>Muscle</tissue>
    </source>
</reference>